<name>LAP4_TRIVH</name>
<comment type="function">
    <text evidence="1">Probable extracellular aminopeptidase which contributes to pathogenicity.</text>
</comment>
<comment type="cofactor">
    <cofactor evidence="1">
        <name>Zn(2+)</name>
        <dbReference type="ChEBI" id="CHEBI:29105"/>
    </cofactor>
    <text evidence="1">Binds 2 Zn(2+) ions per subunit.</text>
</comment>
<comment type="subunit">
    <text evidence="1">Monomer.</text>
</comment>
<comment type="subcellular location">
    <subcellularLocation>
        <location evidence="1">Secreted</location>
    </subcellularLocation>
</comment>
<comment type="similarity">
    <text evidence="3">Belongs to the peptidase M28 family. M28E subfamily.</text>
</comment>
<accession>D4DDS4</accession>
<organism>
    <name type="scientific">Trichophyton verrucosum (strain HKI 0517)</name>
    <dbReference type="NCBI Taxonomy" id="663202"/>
    <lineage>
        <taxon>Eukaryota</taxon>
        <taxon>Fungi</taxon>
        <taxon>Dikarya</taxon>
        <taxon>Ascomycota</taxon>
        <taxon>Pezizomycotina</taxon>
        <taxon>Eurotiomycetes</taxon>
        <taxon>Eurotiomycetidae</taxon>
        <taxon>Onygenales</taxon>
        <taxon>Arthrodermataceae</taxon>
        <taxon>Trichophyton</taxon>
    </lineage>
</organism>
<reference key="1">
    <citation type="journal article" date="2011" name="Genome Biol.">
        <title>Comparative and functional genomics provide insights into the pathogenicity of dermatophytic fungi.</title>
        <authorList>
            <person name="Burmester A."/>
            <person name="Shelest E."/>
            <person name="Gloeckner G."/>
            <person name="Heddergott C."/>
            <person name="Schindler S."/>
            <person name="Staib P."/>
            <person name="Heidel A."/>
            <person name="Felder M."/>
            <person name="Petzold A."/>
            <person name="Szafranski K."/>
            <person name="Feuermann M."/>
            <person name="Pedruzzi I."/>
            <person name="Priebe S."/>
            <person name="Groth M."/>
            <person name="Winkler R."/>
            <person name="Li W."/>
            <person name="Kniemeyer O."/>
            <person name="Schroeckh V."/>
            <person name="Hertweck C."/>
            <person name="Hube B."/>
            <person name="White T.C."/>
            <person name="Platzer M."/>
            <person name="Guthke R."/>
            <person name="Heitman J."/>
            <person name="Woestemeyer J."/>
            <person name="Zipfel P.F."/>
            <person name="Monod M."/>
            <person name="Brakhage A.A."/>
        </authorList>
    </citation>
    <scope>NUCLEOTIDE SEQUENCE [LARGE SCALE GENOMIC DNA]</scope>
    <source>
        <strain>HKI 0517</strain>
    </source>
</reference>
<protein>
    <recommendedName>
        <fullName>Probable leucine aminopeptidase TRV_05286</fullName>
        <ecNumber>3.4.11.-</ecNumber>
    </recommendedName>
    <alternativeName>
        <fullName>Leucyl aminopeptidase TRV_05286</fullName>
    </alternativeName>
</protein>
<gene>
    <name type="ORF">TRV_05286</name>
</gene>
<feature type="signal peptide" evidence="2">
    <location>
        <begin position="1"/>
        <end position="18"/>
    </location>
</feature>
<feature type="chain" id="PRO_0000397774" description="Probable leucine aminopeptidase TRV_05286">
    <location>
        <begin position="19"/>
        <end position="379"/>
    </location>
</feature>
<feature type="binding site" evidence="1">
    <location>
        <position position="182"/>
    </location>
    <ligand>
        <name>Zn(2+)</name>
        <dbReference type="ChEBI" id="CHEBI:29105"/>
        <label>1</label>
    </ligand>
</feature>
<feature type="binding site" evidence="1">
    <location>
        <position position="201"/>
    </location>
    <ligand>
        <name>Zn(2+)</name>
        <dbReference type="ChEBI" id="CHEBI:29105"/>
        <label>1</label>
    </ligand>
</feature>
<feature type="binding site" evidence="1">
    <location>
        <position position="201"/>
    </location>
    <ligand>
        <name>Zn(2+)</name>
        <dbReference type="ChEBI" id="CHEBI:29105"/>
        <label>2</label>
        <note>catalytic</note>
    </ligand>
</feature>
<feature type="binding site" evidence="1">
    <location>
        <position position="240"/>
    </location>
    <ligand>
        <name>Zn(2+)</name>
        <dbReference type="ChEBI" id="CHEBI:29105"/>
        <label>2</label>
        <note>catalytic</note>
    </ligand>
</feature>
<feature type="binding site" evidence="1">
    <location>
        <position position="267"/>
    </location>
    <ligand>
        <name>Zn(2+)</name>
        <dbReference type="ChEBI" id="CHEBI:29105"/>
        <label>1</label>
    </ligand>
</feature>
<feature type="binding site" evidence="1">
    <location>
        <position position="345"/>
    </location>
    <ligand>
        <name>Zn(2+)</name>
        <dbReference type="ChEBI" id="CHEBI:29105"/>
        <label>2</label>
        <note>catalytic</note>
    </ligand>
</feature>
<feature type="glycosylation site" description="N-linked (GlcNAc...) asparagine" evidence="2">
    <location>
        <position position="202"/>
    </location>
</feature>
<feature type="glycosylation site" description="N-linked (GlcNAc...) asparagine" evidence="2">
    <location>
        <position position="226"/>
    </location>
</feature>
<feature type="disulfide bond" evidence="1">
    <location>
        <begin position="312"/>
        <end position="316"/>
    </location>
</feature>
<evidence type="ECO:0000250" key="1"/>
<evidence type="ECO:0000255" key="2"/>
<evidence type="ECO:0000305" key="3"/>
<proteinExistence type="inferred from homology"/>
<sequence>MKIATLAVVSAFAATAIAGPIRPDGVGNDKFLIELGPGETQWVTKQQKHEMRAYINSIYKAGQGFVDITDEFGTDFTTAEVVPANYPKSALHAAVVNPMIAGLSKENLMRDLNTLVKFNNRYYESPTGVESATWVFNEVQKIIQASGVKGAKVEKFTNKFKQFNVIATIPGASKNTVIVGAHQDSINQKDPMKGRAPGADDNGSGTVVVLEAFRNVLKSKAIQAANATNTLEFHWYAGEEGGLLGSNNIFKKYKADGRKVKAMLNQDLTGFTKKGNPEQFGLITDNTNAELNEFCKTIVAKYAALKIVEAKCGYACSDHASAHRNGFPSSFIAETNFRNTNPYLHTADDVIANLDFNHMLEHAKVVVGFMGELAMTPNL</sequence>
<keyword id="KW-0031">Aminopeptidase</keyword>
<keyword id="KW-1015">Disulfide bond</keyword>
<keyword id="KW-0325">Glycoprotein</keyword>
<keyword id="KW-0378">Hydrolase</keyword>
<keyword id="KW-0479">Metal-binding</keyword>
<keyword id="KW-0645">Protease</keyword>
<keyword id="KW-0964">Secreted</keyword>
<keyword id="KW-0732">Signal</keyword>
<keyword id="KW-0843">Virulence</keyword>
<keyword id="KW-0862">Zinc</keyword>
<dbReference type="EC" id="3.4.11.-"/>
<dbReference type="EMBL" id="ACYE01000271">
    <property type="protein sequence ID" value="EFE39991.1"/>
    <property type="molecule type" value="Genomic_DNA"/>
</dbReference>
<dbReference type="RefSeq" id="XP_003020609.1">
    <property type="nucleotide sequence ID" value="XM_003020563.1"/>
</dbReference>
<dbReference type="SMR" id="D4DDS4"/>
<dbReference type="GeneID" id="9577308"/>
<dbReference type="KEGG" id="tve:TRV_05286"/>
<dbReference type="HOGENOM" id="CLU_025866_0_0_1"/>
<dbReference type="OrthoDB" id="1942at34384"/>
<dbReference type="Proteomes" id="UP000008383">
    <property type="component" value="Unassembled WGS sequence"/>
</dbReference>
<dbReference type="GO" id="GO:0005576">
    <property type="term" value="C:extracellular region"/>
    <property type="evidence" value="ECO:0007669"/>
    <property type="project" value="UniProtKB-SubCell"/>
</dbReference>
<dbReference type="GO" id="GO:0004177">
    <property type="term" value="F:aminopeptidase activity"/>
    <property type="evidence" value="ECO:0007669"/>
    <property type="project" value="UniProtKB-KW"/>
</dbReference>
<dbReference type="GO" id="GO:0046872">
    <property type="term" value="F:metal ion binding"/>
    <property type="evidence" value="ECO:0007669"/>
    <property type="project" value="UniProtKB-KW"/>
</dbReference>
<dbReference type="GO" id="GO:0008235">
    <property type="term" value="F:metalloexopeptidase activity"/>
    <property type="evidence" value="ECO:0007669"/>
    <property type="project" value="InterPro"/>
</dbReference>
<dbReference type="GO" id="GO:0006508">
    <property type="term" value="P:proteolysis"/>
    <property type="evidence" value="ECO:0007669"/>
    <property type="project" value="UniProtKB-KW"/>
</dbReference>
<dbReference type="CDD" id="cd03879">
    <property type="entry name" value="M28_AAP"/>
    <property type="match status" value="1"/>
</dbReference>
<dbReference type="FunFam" id="3.40.630.10:FF:000042">
    <property type="entry name" value="Peptide hydrolase"/>
    <property type="match status" value="1"/>
</dbReference>
<dbReference type="Gene3D" id="3.40.630.10">
    <property type="entry name" value="Zn peptidases"/>
    <property type="match status" value="1"/>
</dbReference>
<dbReference type="InterPro" id="IPR045175">
    <property type="entry name" value="M28_fam"/>
</dbReference>
<dbReference type="InterPro" id="IPR007484">
    <property type="entry name" value="Peptidase_M28"/>
</dbReference>
<dbReference type="PANTHER" id="PTHR12147:SF56">
    <property type="entry name" value="AMINOPEPTIDASE YDR415C-RELATED"/>
    <property type="match status" value="1"/>
</dbReference>
<dbReference type="PANTHER" id="PTHR12147">
    <property type="entry name" value="METALLOPEPTIDASE M28 FAMILY MEMBER"/>
    <property type="match status" value="1"/>
</dbReference>
<dbReference type="Pfam" id="PF04389">
    <property type="entry name" value="Peptidase_M28"/>
    <property type="match status" value="1"/>
</dbReference>
<dbReference type="SUPFAM" id="SSF53187">
    <property type="entry name" value="Zn-dependent exopeptidases"/>
    <property type="match status" value="1"/>
</dbReference>